<evidence type="ECO:0000250" key="1">
    <source>
        <dbReference type="UniProtKB" id="Q5SKN9"/>
    </source>
</evidence>
<evidence type="ECO:0000269" key="2">
    <source>
    </source>
</evidence>
<evidence type="ECO:0000303" key="3">
    <source>
    </source>
</evidence>
<evidence type="ECO:0000305" key="4"/>
<proteinExistence type="evidence at protein level"/>
<keyword id="KW-0067">ATP-binding</keyword>
<keyword id="KW-0436">Ligase</keyword>
<keyword id="KW-0460">Magnesium</keyword>
<keyword id="KW-0479">Metal-binding</keyword>
<keyword id="KW-0547">Nucleotide-binding</keyword>
<organism>
    <name type="scientific">Streptomyces sp</name>
    <dbReference type="NCBI Taxonomy" id="1931"/>
    <lineage>
        <taxon>Bacteria</taxon>
        <taxon>Bacillati</taxon>
        <taxon>Actinomycetota</taxon>
        <taxon>Actinomycetes</taxon>
        <taxon>Kitasatosporales</taxon>
        <taxon>Streptomycetaceae</taxon>
        <taxon>Streptomyces</taxon>
    </lineage>
</organism>
<comment type="function">
    <text evidence="2">Ligase involved in the biosynthesis of avenalumic acid (AVA) (PubMed:36115045). Catalyzes the diazotization of 3-aminoavenalumic acid (3-AAA) to 3-diazoavenalumic acid (3-DAA) (PubMed:36115045). It can also act on 3-aminocoumaric acid (3-ACA) and 3-amino-4-hydroxybenzoic acid (3,4-AHBA) with lower activity (PubMed:36115045).</text>
</comment>
<comment type="catalytic activity">
    <reaction evidence="2">
        <text>3-aminoavenalumate + nitrite + ATP = 3-diazoavenalumate + AMP + diphosphate + H2O</text>
        <dbReference type="Rhea" id="RHEA:78999"/>
        <dbReference type="ChEBI" id="CHEBI:15377"/>
        <dbReference type="ChEBI" id="CHEBI:16301"/>
        <dbReference type="ChEBI" id="CHEBI:30616"/>
        <dbReference type="ChEBI" id="CHEBI:33019"/>
        <dbReference type="ChEBI" id="CHEBI:229669"/>
        <dbReference type="ChEBI" id="CHEBI:229670"/>
        <dbReference type="ChEBI" id="CHEBI:456215"/>
        <dbReference type="EC" id="6.7.1.2"/>
    </reaction>
    <physiologicalReaction direction="left-to-right" evidence="2">
        <dbReference type="Rhea" id="RHEA:79000"/>
    </physiologicalReaction>
</comment>
<comment type="catalytic activity">
    <reaction evidence="2">
        <text>(E)-3-aminocoumarate + nitrite + ATP + H(+) = (E)-3-diazocoumarate + AMP + diphosphate + H2O</text>
        <dbReference type="Rhea" id="RHEA:79003"/>
        <dbReference type="ChEBI" id="CHEBI:15377"/>
        <dbReference type="ChEBI" id="CHEBI:15378"/>
        <dbReference type="ChEBI" id="CHEBI:16301"/>
        <dbReference type="ChEBI" id="CHEBI:30616"/>
        <dbReference type="ChEBI" id="CHEBI:33019"/>
        <dbReference type="ChEBI" id="CHEBI:229672"/>
        <dbReference type="ChEBI" id="CHEBI:229673"/>
        <dbReference type="ChEBI" id="CHEBI:456215"/>
        <dbReference type="EC" id="6.7.1.2"/>
    </reaction>
</comment>
<comment type="catalytic activity">
    <reaction evidence="2">
        <text>3-amino-4-hydroxybenzoate + nitrite + ATP + H(+) = 3-diazo-4-hydroxybenzoate + AMP + diphosphate + H2O</text>
        <dbReference type="Rhea" id="RHEA:79007"/>
        <dbReference type="ChEBI" id="CHEBI:15377"/>
        <dbReference type="ChEBI" id="CHEBI:15378"/>
        <dbReference type="ChEBI" id="CHEBI:16301"/>
        <dbReference type="ChEBI" id="CHEBI:30616"/>
        <dbReference type="ChEBI" id="CHEBI:33019"/>
        <dbReference type="ChEBI" id="CHEBI:60005"/>
        <dbReference type="ChEBI" id="CHEBI:229674"/>
        <dbReference type="ChEBI" id="CHEBI:456215"/>
        <dbReference type="EC" id="6.7.1.2"/>
    </reaction>
</comment>
<comment type="cofactor">
    <cofactor evidence="1">
        <name>Mg(2+)</name>
        <dbReference type="ChEBI" id="CHEBI:18420"/>
    </cofactor>
</comment>
<comment type="biophysicochemical properties">
    <kinetics>
        <KM evidence="2">160 uM for 3-AAA</KM>
        <KM evidence="2">240 uM for 3,4-AHBA</KM>
        <KM evidence="2">260 uM for ATP (in the presence of 3-AAA)</KM>
        <KM evidence="2">3500 uM for ATP (in the presence of 3,4-AHBA)</KM>
        <KM evidence="2">280 uM for NaNO(2) (in the presence of 3-AAA)</KM>
        <text evidence="2">kcat is 0.30 min(-1) with 3-AAA as substrate. kcat is 0.13 min(-1) with 3,4-AHBA as substrate. kcat is 0.10 min(-1) with ATP as substrate (in the presence of 3-AAA). kcat is 0.25 min(-1) with ATP as substrate (in the presence of 3,4-AHBA). kcat is 0.056 min(-1) with NaNO(2) as substrate (in the presence of 3-AAA).</text>
    </kinetics>
</comment>
<comment type="induction">
    <text evidence="2">The avenalumate biosynthetic gene cluster may be dormant under laboratory conditions.</text>
</comment>
<comment type="similarity">
    <text evidence="4">Belongs to the ATP-dependent AMP-binding enzyme family.</text>
</comment>
<protein>
    <recommendedName>
        <fullName evidence="4">3-aminoavenalumate diazotase</fullName>
        <ecNumber evidence="2">6.7.1.2</ecNumber>
    </recommendedName>
</protein>
<reference key="1">
    <citation type="journal article" date="2022" name="Angew. Chem. Int. Ed.">
        <title>Bacterial Avenalumic Acid Biosynthesis Includes Substitution of an Aromatic Amino Group for Hydride by Nitrous Acid Dependent Diazotization.</title>
        <authorList>
            <person name="Kawai S."/>
            <person name="Hagihara R."/>
            <person name="Shin-Ya K."/>
            <person name="Katsuyama Y."/>
            <person name="Ohnishi Y."/>
        </authorList>
    </citation>
    <scope>NUCLEOTIDE SEQUENCE [GENOMIC DNA]</scope>
    <scope>FUNCTION</scope>
    <scope>CATALYTIC ACTIVITY</scope>
    <scope>BIOPHYSICOCHEMICAL PROPERTIES</scope>
    <scope>INDUCTION</scope>
    <source>
        <strain>RI-77</strain>
    </source>
</reference>
<name>AVAA6_STRSQ</name>
<accession>P0DXD8</accession>
<sequence length="559" mass="60727">MLISRQERARICSDSELGAGNLLARLKAYGRPLDEPVLRTDGTWRAPDGSRPEVLTLGELYAVVEAYAGWYAAHGVRPRDPVALHSSSSAEFAVNFLALTSLGAIPSFVNGNLAPETAREYVRRQGAVGAFTDESHREVLTDAGLGFHVTADAIRPEHRASLPASYPYRHDPTDPVLISHSSGTTGMPKGVPHTHRTLMYAQVHRLRYSTGTDMERTLVGLPGAHNAMVATLLYCLLLRTDIKLLSSQRGADVLDTVEEFRPTTVLAFAGTFGEMAAEDLTRRDLSSVQVWFNTGDAAHEAHIRALVAHGSHQKVDRDLRRVRVDGSVFVDGLGSSEAGYSVFHNRHTKDTDAYARRIGKPISFAEAAVLSEDGIPLPPGQIGRLGLKSPTLTPGYWNDSLTWNRMRLGGYWLTGDLAHQDEDGNFYHLDRAPDAVRTRAGIVFSTRTEELLLAELPELADCTVVGVAPDGVRADWDGDGEGEAYALLQVTDEGAADAADAAGGDEAWTERVNSVLTAAGYPPVHRALRMKPDDVAKGATGKVLKRVMRDRFAAEEQHA</sequence>
<gene>
    <name evidence="3" type="primary">avaA6</name>
</gene>
<dbReference type="EC" id="6.7.1.2" evidence="2"/>
<dbReference type="EMBL" id="LC710852">
    <property type="protein sequence ID" value="BDI54813.1"/>
    <property type="molecule type" value="Genomic_DNA"/>
</dbReference>
<dbReference type="SMR" id="P0DXD8"/>
<dbReference type="KEGG" id="ag:BDI54813"/>
<dbReference type="GO" id="GO:0005524">
    <property type="term" value="F:ATP binding"/>
    <property type="evidence" value="ECO:0007669"/>
    <property type="project" value="UniProtKB-KW"/>
</dbReference>
<dbReference type="GO" id="GO:0016405">
    <property type="term" value="F:CoA-ligase activity"/>
    <property type="evidence" value="ECO:0007669"/>
    <property type="project" value="TreeGrafter"/>
</dbReference>
<dbReference type="GO" id="GO:0046872">
    <property type="term" value="F:metal ion binding"/>
    <property type="evidence" value="ECO:0007669"/>
    <property type="project" value="UniProtKB-KW"/>
</dbReference>
<dbReference type="CDD" id="cd04433">
    <property type="entry name" value="AFD_class_I"/>
    <property type="match status" value="1"/>
</dbReference>
<dbReference type="Gene3D" id="3.40.50.12780">
    <property type="entry name" value="N-terminal domain of ligase-like"/>
    <property type="match status" value="1"/>
</dbReference>
<dbReference type="InterPro" id="IPR020845">
    <property type="entry name" value="AMP-binding_CS"/>
</dbReference>
<dbReference type="InterPro" id="IPR000873">
    <property type="entry name" value="AMP-dep_synth/lig_dom"/>
</dbReference>
<dbReference type="InterPro" id="IPR042099">
    <property type="entry name" value="ANL_N_sf"/>
</dbReference>
<dbReference type="PANTHER" id="PTHR24096">
    <property type="entry name" value="LONG-CHAIN-FATTY-ACID--COA LIGASE"/>
    <property type="match status" value="1"/>
</dbReference>
<dbReference type="PANTHER" id="PTHR24096:SF267">
    <property type="entry name" value="MALONATE--COA LIGASE ACSF3, MITOCHONDRIAL"/>
    <property type="match status" value="1"/>
</dbReference>
<dbReference type="Pfam" id="PF00501">
    <property type="entry name" value="AMP-binding"/>
    <property type="match status" value="1"/>
</dbReference>
<dbReference type="SUPFAM" id="SSF56801">
    <property type="entry name" value="Acetyl-CoA synthetase-like"/>
    <property type="match status" value="1"/>
</dbReference>
<dbReference type="PROSITE" id="PS00455">
    <property type="entry name" value="AMP_BINDING"/>
    <property type="match status" value="1"/>
</dbReference>
<feature type="chain" id="PRO_0000460778" description="3-aminoavenalumate diazotase">
    <location>
        <begin position="1"/>
        <end position="559"/>
    </location>
</feature>
<feature type="binding site" evidence="1">
    <location>
        <position position="181"/>
    </location>
    <ligand>
        <name>Mg(2+)</name>
        <dbReference type="ChEBI" id="CHEBI:18420"/>
    </ligand>
</feature>
<feature type="binding site" evidence="1">
    <location>
        <position position="227"/>
    </location>
    <ligand>
        <name>ATP</name>
        <dbReference type="ChEBI" id="CHEBI:30616"/>
    </ligand>
</feature>
<feature type="binding site" evidence="1">
    <location>
        <position position="332"/>
    </location>
    <ligand>
        <name>ATP</name>
        <dbReference type="ChEBI" id="CHEBI:30616"/>
    </ligand>
</feature>
<feature type="binding site" evidence="1">
    <location>
        <position position="336"/>
    </location>
    <ligand>
        <name>ATP</name>
        <dbReference type="ChEBI" id="CHEBI:30616"/>
    </ligand>
</feature>
<feature type="binding site" evidence="1">
    <location>
        <position position="337"/>
    </location>
    <ligand>
        <name>Mg(2+)</name>
        <dbReference type="ChEBI" id="CHEBI:18420"/>
    </ligand>
</feature>
<feature type="binding site" evidence="1">
    <location>
        <position position="416"/>
    </location>
    <ligand>
        <name>ATP</name>
        <dbReference type="ChEBI" id="CHEBI:30616"/>
    </ligand>
</feature>
<feature type="binding site" evidence="1">
    <location>
        <position position="437"/>
    </location>
    <ligand>
        <name>ATP</name>
        <dbReference type="ChEBI" id="CHEBI:30616"/>
    </ligand>
</feature>